<accession>B7JVH4</accession>
<dbReference type="EC" id="6.3.4.5" evidence="1"/>
<dbReference type="EMBL" id="CP001287">
    <property type="protein sequence ID" value="ACK68307.1"/>
    <property type="molecule type" value="Genomic_DNA"/>
</dbReference>
<dbReference type="RefSeq" id="WP_015785362.1">
    <property type="nucleotide sequence ID" value="NC_011726.1"/>
</dbReference>
<dbReference type="SMR" id="B7JVH4"/>
<dbReference type="STRING" id="41431.PCC8801_4385"/>
<dbReference type="KEGG" id="cyp:PCC8801_4385"/>
<dbReference type="eggNOG" id="COG0137">
    <property type="taxonomic scope" value="Bacteria"/>
</dbReference>
<dbReference type="HOGENOM" id="CLU_032784_4_2_3"/>
<dbReference type="OrthoDB" id="9801641at2"/>
<dbReference type="UniPathway" id="UPA00068">
    <property type="reaction ID" value="UER00113"/>
</dbReference>
<dbReference type="Proteomes" id="UP000008204">
    <property type="component" value="Chromosome"/>
</dbReference>
<dbReference type="GO" id="GO:0005737">
    <property type="term" value="C:cytoplasm"/>
    <property type="evidence" value="ECO:0007669"/>
    <property type="project" value="UniProtKB-SubCell"/>
</dbReference>
<dbReference type="GO" id="GO:0004055">
    <property type="term" value="F:argininosuccinate synthase activity"/>
    <property type="evidence" value="ECO:0007669"/>
    <property type="project" value="UniProtKB-UniRule"/>
</dbReference>
<dbReference type="GO" id="GO:0005524">
    <property type="term" value="F:ATP binding"/>
    <property type="evidence" value="ECO:0007669"/>
    <property type="project" value="UniProtKB-UniRule"/>
</dbReference>
<dbReference type="GO" id="GO:0000053">
    <property type="term" value="P:argininosuccinate metabolic process"/>
    <property type="evidence" value="ECO:0007669"/>
    <property type="project" value="TreeGrafter"/>
</dbReference>
<dbReference type="GO" id="GO:0006526">
    <property type="term" value="P:L-arginine biosynthetic process"/>
    <property type="evidence" value="ECO:0007669"/>
    <property type="project" value="UniProtKB-UniRule"/>
</dbReference>
<dbReference type="GO" id="GO:0000050">
    <property type="term" value="P:urea cycle"/>
    <property type="evidence" value="ECO:0007669"/>
    <property type="project" value="TreeGrafter"/>
</dbReference>
<dbReference type="CDD" id="cd01999">
    <property type="entry name" value="ASS"/>
    <property type="match status" value="1"/>
</dbReference>
<dbReference type="FunFam" id="3.40.50.620:FF:000019">
    <property type="entry name" value="Argininosuccinate synthase"/>
    <property type="match status" value="1"/>
</dbReference>
<dbReference type="FunFam" id="3.90.1260.10:FF:000007">
    <property type="entry name" value="Argininosuccinate synthase"/>
    <property type="match status" value="1"/>
</dbReference>
<dbReference type="Gene3D" id="3.90.1260.10">
    <property type="entry name" value="Argininosuccinate synthetase, chain A, domain 2"/>
    <property type="match status" value="1"/>
</dbReference>
<dbReference type="Gene3D" id="3.40.50.620">
    <property type="entry name" value="HUPs"/>
    <property type="match status" value="1"/>
</dbReference>
<dbReference type="Gene3D" id="1.20.5.470">
    <property type="entry name" value="Single helix bin"/>
    <property type="match status" value="1"/>
</dbReference>
<dbReference type="HAMAP" id="MF_00005">
    <property type="entry name" value="Arg_succ_synth_type1"/>
    <property type="match status" value="1"/>
</dbReference>
<dbReference type="InterPro" id="IPR048268">
    <property type="entry name" value="Arginosuc_syn_C"/>
</dbReference>
<dbReference type="InterPro" id="IPR048267">
    <property type="entry name" value="Arginosuc_syn_N"/>
</dbReference>
<dbReference type="InterPro" id="IPR001518">
    <property type="entry name" value="Arginosuc_synth"/>
</dbReference>
<dbReference type="InterPro" id="IPR018223">
    <property type="entry name" value="Arginosuc_synth_CS"/>
</dbReference>
<dbReference type="InterPro" id="IPR023434">
    <property type="entry name" value="Arginosuc_synth_type_1_subfam"/>
</dbReference>
<dbReference type="InterPro" id="IPR024074">
    <property type="entry name" value="AS_cat/multimer_dom_body"/>
</dbReference>
<dbReference type="InterPro" id="IPR014729">
    <property type="entry name" value="Rossmann-like_a/b/a_fold"/>
</dbReference>
<dbReference type="NCBIfam" id="TIGR00032">
    <property type="entry name" value="argG"/>
    <property type="match status" value="1"/>
</dbReference>
<dbReference type="NCBIfam" id="NF001770">
    <property type="entry name" value="PRK00509.1"/>
    <property type="match status" value="1"/>
</dbReference>
<dbReference type="PANTHER" id="PTHR11587">
    <property type="entry name" value="ARGININOSUCCINATE SYNTHASE"/>
    <property type="match status" value="1"/>
</dbReference>
<dbReference type="PANTHER" id="PTHR11587:SF2">
    <property type="entry name" value="ARGININOSUCCINATE SYNTHASE"/>
    <property type="match status" value="1"/>
</dbReference>
<dbReference type="Pfam" id="PF20979">
    <property type="entry name" value="Arginosuc_syn_C"/>
    <property type="match status" value="1"/>
</dbReference>
<dbReference type="Pfam" id="PF00764">
    <property type="entry name" value="Arginosuc_synth"/>
    <property type="match status" value="1"/>
</dbReference>
<dbReference type="SUPFAM" id="SSF52402">
    <property type="entry name" value="Adenine nucleotide alpha hydrolases-like"/>
    <property type="match status" value="1"/>
</dbReference>
<dbReference type="SUPFAM" id="SSF69864">
    <property type="entry name" value="Argininosuccinate synthetase, C-terminal domain"/>
    <property type="match status" value="1"/>
</dbReference>
<dbReference type="PROSITE" id="PS00564">
    <property type="entry name" value="ARGININOSUCCIN_SYN_1"/>
    <property type="match status" value="1"/>
</dbReference>
<dbReference type="PROSITE" id="PS00565">
    <property type="entry name" value="ARGININOSUCCIN_SYN_2"/>
    <property type="match status" value="1"/>
</dbReference>
<feature type="chain" id="PRO_1000116189" description="Argininosuccinate synthase">
    <location>
        <begin position="1"/>
        <end position="399"/>
    </location>
</feature>
<feature type="binding site" evidence="1">
    <location>
        <begin position="10"/>
        <end position="18"/>
    </location>
    <ligand>
        <name>ATP</name>
        <dbReference type="ChEBI" id="CHEBI:30616"/>
    </ligand>
</feature>
<feature type="binding site" evidence="1">
    <location>
        <position position="38"/>
    </location>
    <ligand>
        <name>ATP</name>
        <dbReference type="ChEBI" id="CHEBI:30616"/>
    </ligand>
</feature>
<feature type="binding site" evidence="1">
    <location>
        <position position="89"/>
    </location>
    <ligand>
        <name>L-citrulline</name>
        <dbReference type="ChEBI" id="CHEBI:57743"/>
    </ligand>
</feature>
<feature type="binding site" evidence="1">
    <location>
        <position position="119"/>
    </location>
    <ligand>
        <name>ATP</name>
        <dbReference type="ChEBI" id="CHEBI:30616"/>
    </ligand>
</feature>
<feature type="binding site" evidence="1">
    <location>
        <position position="121"/>
    </location>
    <ligand>
        <name>L-aspartate</name>
        <dbReference type="ChEBI" id="CHEBI:29991"/>
    </ligand>
</feature>
<feature type="binding site" evidence="1">
    <location>
        <position position="125"/>
    </location>
    <ligand>
        <name>L-aspartate</name>
        <dbReference type="ChEBI" id="CHEBI:29991"/>
    </ligand>
</feature>
<feature type="binding site" evidence="1">
    <location>
        <position position="125"/>
    </location>
    <ligand>
        <name>L-citrulline</name>
        <dbReference type="ChEBI" id="CHEBI:57743"/>
    </ligand>
</feature>
<feature type="binding site" evidence="1">
    <location>
        <position position="126"/>
    </location>
    <ligand>
        <name>L-aspartate</name>
        <dbReference type="ChEBI" id="CHEBI:29991"/>
    </ligand>
</feature>
<feature type="binding site" evidence="1">
    <location>
        <position position="129"/>
    </location>
    <ligand>
        <name>L-citrulline</name>
        <dbReference type="ChEBI" id="CHEBI:57743"/>
    </ligand>
</feature>
<feature type="binding site" evidence="1">
    <location>
        <position position="177"/>
    </location>
    <ligand>
        <name>L-citrulline</name>
        <dbReference type="ChEBI" id="CHEBI:57743"/>
    </ligand>
</feature>
<feature type="binding site" evidence="1">
    <location>
        <position position="186"/>
    </location>
    <ligand>
        <name>L-citrulline</name>
        <dbReference type="ChEBI" id="CHEBI:57743"/>
    </ligand>
</feature>
<feature type="binding site" evidence="1">
    <location>
        <position position="262"/>
    </location>
    <ligand>
        <name>L-citrulline</name>
        <dbReference type="ChEBI" id="CHEBI:57743"/>
    </ligand>
</feature>
<feature type="binding site" evidence="1">
    <location>
        <position position="274"/>
    </location>
    <ligand>
        <name>L-citrulline</name>
        <dbReference type="ChEBI" id="CHEBI:57743"/>
    </ligand>
</feature>
<proteinExistence type="inferred from homology"/>
<gene>
    <name evidence="1" type="primary">argG</name>
    <name type="ordered locus">PCC8801_4385</name>
</gene>
<evidence type="ECO:0000255" key="1">
    <source>
        <dbReference type="HAMAP-Rule" id="MF_00005"/>
    </source>
</evidence>
<reference key="1">
    <citation type="journal article" date="2011" name="MBio">
        <title>Novel metabolic attributes of the genus Cyanothece, comprising a group of unicellular nitrogen-fixing Cyanobacteria.</title>
        <authorList>
            <person name="Bandyopadhyay A."/>
            <person name="Elvitigala T."/>
            <person name="Welsh E."/>
            <person name="Stockel J."/>
            <person name="Liberton M."/>
            <person name="Min H."/>
            <person name="Sherman L.A."/>
            <person name="Pakrasi H.B."/>
        </authorList>
    </citation>
    <scope>NUCLEOTIDE SEQUENCE [LARGE SCALE GENOMIC DNA]</scope>
    <source>
        <strain>PCC 8801 / RF-1</strain>
    </source>
</reference>
<organism>
    <name type="scientific">Rippkaea orientalis (strain PCC 8801 / RF-1)</name>
    <name type="common">Cyanothece sp. (strain PCC 8801)</name>
    <dbReference type="NCBI Taxonomy" id="41431"/>
    <lineage>
        <taxon>Bacteria</taxon>
        <taxon>Bacillati</taxon>
        <taxon>Cyanobacteriota</taxon>
        <taxon>Cyanophyceae</taxon>
        <taxon>Oscillatoriophycideae</taxon>
        <taxon>Chroococcales</taxon>
        <taxon>Aphanothecaceae</taxon>
        <taxon>Rippkaea</taxon>
        <taxon>Rippkaea orientalis</taxon>
    </lineage>
</organism>
<comment type="catalytic activity">
    <reaction evidence="1">
        <text>L-citrulline + L-aspartate + ATP = 2-(N(omega)-L-arginino)succinate + AMP + diphosphate + H(+)</text>
        <dbReference type="Rhea" id="RHEA:10932"/>
        <dbReference type="ChEBI" id="CHEBI:15378"/>
        <dbReference type="ChEBI" id="CHEBI:29991"/>
        <dbReference type="ChEBI" id="CHEBI:30616"/>
        <dbReference type="ChEBI" id="CHEBI:33019"/>
        <dbReference type="ChEBI" id="CHEBI:57472"/>
        <dbReference type="ChEBI" id="CHEBI:57743"/>
        <dbReference type="ChEBI" id="CHEBI:456215"/>
        <dbReference type="EC" id="6.3.4.5"/>
    </reaction>
</comment>
<comment type="pathway">
    <text evidence="1">Amino-acid biosynthesis; L-arginine biosynthesis; L-arginine from L-ornithine and carbamoyl phosphate: step 2/3.</text>
</comment>
<comment type="subunit">
    <text evidence="1">Homotetramer.</text>
</comment>
<comment type="subcellular location">
    <subcellularLocation>
        <location evidence="1">Cytoplasm</location>
    </subcellularLocation>
</comment>
<comment type="similarity">
    <text evidence="1">Belongs to the argininosuccinate synthase family. Type 1 subfamily.</text>
</comment>
<name>ASSY_RIPO1</name>
<keyword id="KW-0028">Amino-acid biosynthesis</keyword>
<keyword id="KW-0055">Arginine biosynthesis</keyword>
<keyword id="KW-0067">ATP-binding</keyword>
<keyword id="KW-0963">Cytoplasm</keyword>
<keyword id="KW-0436">Ligase</keyword>
<keyword id="KW-0547">Nucleotide-binding</keyword>
<keyword id="KW-1185">Reference proteome</keyword>
<sequence length="399" mass="43696">MGRADKVVLAYSGGVDTSVCIPYLKNEWGVKEVITLAADLGQGDELGPIQAKALRCGAVESLVTNAQEEFVTEYAFRAIKANALYENRYPLSTALARPLIAKLLVEAAEKYGADAVAHGCTAKGNDQVRFDLGILALNPNLKVLAPAREWNMSREETIAYGERCGVESPVKKSSPFSIDRNLLGRSIEAGPLEDPMTEPPEEIYLMTKAIADTPDTPEYVDIGFEKGIPVSLNGQTLDPVSLISQLNEKVGNHGVGRLDMIENRVVGIKSREIYEAPALLVLIDAHRDLESLTLTADVTQYKHGVGDTYSQLIYRGLWYSPLKTALDALIDQTQERVTGMVRVKLFKGNAVIVGRQSENSIYSANLSTYGSDDAFDHKAAEGFIYIWGLPTRVWAQKTK</sequence>
<protein>
    <recommendedName>
        <fullName evidence="1">Argininosuccinate synthase</fullName>
        <ecNumber evidence="1">6.3.4.5</ecNumber>
    </recommendedName>
    <alternativeName>
        <fullName evidence="1">Citrulline--aspartate ligase</fullName>
    </alternativeName>
</protein>